<organism>
    <name type="scientific">Burkholderia pseudomallei (strain 1710b)</name>
    <dbReference type="NCBI Taxonomy" id="320372"/>
    <lineage>
        <taxon>Bacteria</taxon>
        <taxon>Pseudomonadati</taxon>
        <taxon>Pseudomonadota</taxon>
        <taxon>Betaproteobacteria</taxon>
        <taxon>Burkholderiales</taxon>
        <taxon>Burkholderiaceae</taxon>
        <taxon>Burkholderia</taxon>
        <taxon>pseudomallei group</taxon>
    </lineage>
</organism>
<accession>Q3JW88</accession>
<reference key="1">
    <citation type="journal article" date="2010" name="Genome Biol. Evol.">
        <title>Continuing evolution of Burkholderia mallei through genome reduction and large-scale rearrangements.</title>
        <authorList>
            <person name="Losada L."/>
            <person name="Ronning C.M."/>
            <person name="DeShazer D."/>
            <person name="Woods D."/>
            <person name="Fedorova N."/>
            <person name="Kim H.S."/>
            <person name="Shabalina S.A."/>
            <person name="Pearson T.R."/>
            <person name="Brinkac L."/>
            <person name="Tan P."/>
            <person name="Nandi T."/>
            <person name="Crabtree J."/>
            <person name="Badger J."/>
            <person name="Beckstrom-Sternberg S."/>
            <person name="Saqib M."/>
            <person name="Schutzer S.E."/>
            <person name="Keim P."/>
            <person name="Nierman W.C."/>
        </authorList>
    </citation>
    <scope>NUCLEOTIDE SEQUENCE [LARGE SCALE GENOMIC DNA]</scope>
    <source>
        <strain>1710b</strain>
    </source>
</reference>
<sequence>MIKLIVGLGNPGAEYTATRHNAGFWLVDQLAREAGATLRDERRFHGFYAKARLFGEEVHLLEPQTYMNRSGQAVVALAHFFKILPTEILVAHDELDLPPGAAKLKLGGGSGGHNGLKDISAHLSSQQYWRLRIGIGHPRDLIPESARAGAKPDVANFVLKPPRKDEQDLIDAAIERALAVMPTAIKGETERAMMQLHRNGA</sequence>
<dbReference type="EC" id="3.1.1.29" evidence="1"/>
<dbReference type="EMBL" id="CP000124">
    <property type="protein sequence ID" value="ABA48533.1"/>
    <property type="molecule type" value="Genomic_DNA"/>
</dbReference>
<dbReference type="RefSeq" id="WP_004202941.1">
    <property type="nucleotide sequence ID" value="NC_007434.1"/>
</dbReference>
<dbReference type="SMR" id="Q3JW88"/>
<dbReference type="EnsemblBacteria" id="ABA48533">
    <property type="protein sequence ID" value="ABA48533"/>
    <property type="gene ID" value="BURPS1710b_0751"/>
</dbReference>
<dbReference type="GeneID" id="93059040"/>
<dbReference type="KEGG" id="bpm:BURPS1710b_0751"/>
<dbReference type="HOGENOM" id="CLU_062456_3_1_4"/>
<dbReference type="Proteomes" id="UP000002700">
    <property type="component" value="Chromosome I"/>
</dbReference>
<dbReference type="GO" id="GO:0005737">
    <property type="term" value="C:cytoplasm"/>
    <property type="evidence" value="ECO:0007669"/>
    <property type="project" value="UniProtKB-SubCell"/>
</dbReference>
<dbReference type="GO" id="GO:0004045">
    <property type="term" value="F:peptidyl-tRNA hydrolase activity"/>
    <property type="evidence" value="ECO:0007669"/>
    <property type="project" value="UniProtKB-UniRule"/>
</dbReference>
<dbReference type="GO" id="GO:0000049">
    <property type="term" value="F:tRNA binding"/>
    <property type="evidence" value="ECO:0007669"/>
    <property type="project" value="UniProtKB-UniRule"/>
</dbReference>
<dbReference type="GO" id="GO:0006515">
    <property type="term" value="P:protein quality control for misfolded or incompletely synthesized proteins"/>
    <property type="evidence" value="ECO:0007669"/>
    <property type="project" value="UniProtKB-UniRule"/>
</dbReference>
<dbReference type="GO" id="GO:0072344">
    <property type="term" value="P:rescue of stalled ribosome"/>
    <property type="evidence" value="ECO:0007669"/>
    <property type="project" value="UniProtKB-UniRule"/>
</dbReference>
<dbReference type="CDD" id="cd00462">
    <property type="entry name" value="PTH"/>
    <property type="match status" value="1"/>
</dbReference>
<dbReference type="FunFam" id="3.40.50.1470:FF:000001">
    <property type="entry name" value="Peptidyl-tRNA hydrolase"/>
    <property type="match status" value="1"/>
</dbReference>
<dbReference type="Gene3D" id="3.40.50.1470">
    <property type="entry name" value="Peptidyl-tRNA hydrolase"/>
    <property type="match status" value="1"/>
</dbReference>
<dbReference type="HAMAP" id="MF_00083">
    <property type="entry name" value="Pept_tRNA_hydro_bact"/>
    <property type="match status" value="1"/>
</dbReference>
<dbReference type="InterPro" id="IPR001328">
    <property type="entry name" value="Pept_tRNA_hydro"/>
</dbReference>
<dbReference type="InterPro" id="IPR018171">
    <property type="entry name" value="Pept_tRNA_hydro_CS"/>
</dbReference>
<dbReference type="InterPro" id="IPR036416">
    <property type="entry name" value="Pept_tRNA_hydro_sf"/>
</dbReference>
<dbReference type="NCBIfam" id="TIGR00447">
    <property type="entry name" value="pth"/>
    <property type="match status" value="1"/>
</dbReference>
<dbReference type="PANTHER" id="PTHR17224">
    <property type="entry name" value="PEPTIDYL-TRNA HYDROLASE"/>
    <property type="match status" value="1"/>
</dbReference>
<dbReference type="PANTHER" id="PTHR17224:SF1">
    <property type="entry name" value="PEPTIDYL-TRNA HYDROLASE"/>
    <property type="match status" value="1"/>
</dbReference>
<dbReference type="Pfam" id="PF01195">
    <property type="entry name" value="Pept_tRNA_hydro"/>
    <property type="match status" value="1"/>
</dbReference>
<dbReference type="SUPFAM" id="SSF53178">
    <property type="entry name" value="Peptidyl-tRNA hydrolase-like"/>
    <property type="match status" value="1"/>
</dbReference>
<dbReference type="PROSITE" id="PS01195">
    <property type="entry name" value="PEPT_TRNA_HYDROL_1"/>
    <property type="match status" value="1"/>
</dbReference>
<dbReference type="PROSITE" id="PS01196">
    <property type="entry name" value="PEPT_TRNA_HYDROL_2"/>
    <property type="match status" value="1"/>
</dbReference>
<name>PTH_BURP1</name>
<gene>
    <name evidence="1" type="primary">pth</name>
    <name type="ordered locus">BURPS1710b_0751</name>
</gene>
<keyword id="KW-0963">Cytoplasm</keyword>
<keyword id="KW-0378">Hydrolase</keyword>
<keyword id="KW-0694">RNA-binding</keyword>
<keyword id="KW-0820">tRNA-binding</keyword>
<feature type="chain" id="PRO_0000264012" description="Peptidyl-tRNA hydrolase">
    <location>
        <begin position="1"/>
        <end position="201"/>
    </location>
</feature>
<feature type="active site" description="Proton acceptor" evidence="1">
    <location>
        <position position="20"/>
    </location>
</feature>
<feature type="binding site" evidence="1">
    <location>
        <position position="15"/>
    </location>
    <ligand>
        <name>tRNA</name>
        <dbReference type="ChEBI" id="CHEBI:17843"/>
    </ligand>
</feature>
<feature type="binding site" evidence="1">
    <location>
        <position position="66"/>
    </location>
    <ligand>
        <name>tRNA</name>
        <dbReference type="ChEBI" id="CHEBI:17843"/>
    </ligand>
</feature>
<feature type="binding site" evidence="1">
    <location>
        <position position="68"/>
    </location>
    <ligand>
        <name>tRNA</name>
        <dbReference type="ChEBI" id="CHEBI:17843"/>
    </ligand>
</feature>
<feature type="binding site" evidence="1">
    <location>
        <position position="114"/>
    </location>
    <ligand>
        <name>tRNA</name>
        <dbReference type="ChEBI" id="CHEBI:17843"/>
    </ligand>
</feature>
<feature type="site" description="Discriminates between blocked and unblocked aminoacyl-tRNA" evidence="1">
    <location>
        <position position="10"/>
    </location>
</feature>
<feature type="site" description="Stabilizes the basic form of H active site to accept a proton" evidence="1">
    <location>
        <position position="93"/>
    </location>
</feature>
<evidence type="ECO:0000255" key="1">
    <source>
        <dbReference type="HAMAP-Rule" id="MF_00083"/>
    </source>
</evidence>
<comment type="function">
    <text evidence="1">Hydrolyzes ribosome-free peptidyl-tRNAs (with 1 or more amino acids incorporated), which drop off the ribosome during protein synthesis, or as a result of ribosome stalling.</text>
</comment>
<comment type="function">
    <text evidence="1">Catalyzes the release of premature peptidyl moieties from peptidyl-tRNA molecules trapped in stalled 50S ribosomal subunits, and thus maintains levels of free tRNAs and 50S ribosomes.</text>
</comment>
<comment type="catalytic activity">
    <reaction evidence="1">
        <text>an N-acyl-L-alpha-aminoacyl-tRNA + H2O = an N-acyl-L-amino acid + a tRNA + H(+)</text>
        <dbReference type="Rhea" id="RHEA:54448"/>
        <dbReference type="Rhea" id="RHEA-COMP:10123"/>
        <dbReference type="Rhea" id="RHEA-COMP:13883"/>
        <dbReference type="ChEBI" id="CHEBI:15377"/>
        <dbReference type="ChEBI" id="CHEBI:15378"/>
        <dbReference type="ChEBI" id="CHEBI:59874"/>
        <dbReference type="ChEBI" id="CHEBI:78442"/>
        <dbReference type="ChEBI" id="CHEBI:138191"/>
        <dbReference type="EC" id="3.1.1.29"/>
    </reaction>
</comment>
<comment type="subunit">
    <text evidence="1">Monomer.</text>
</comment>
<comment type="subcellular location">
    <subcellularLocation>
        <location evidence="1">Cytoplasm</location>
    </subcellularLocation>
</comment>
<comment type="similarity">
    <text evidence="1">Belongs to the PTH family.</text>
</comment>
<protein>
    <recommendedName>
        <fullName evidence="1">Peptidyl-tRNA hydrolase</fullName>
        <shortName evidence="1">Pth</shortName>
        <ecNumber evidence="1">3.1.1.29</ecNumber>
    </recommendedName>
</protein>
<proteinExistence type="inferred from homology"/>